<comment type="function">
    <text evidence="1">Catalyzes the 2-thiolation of uridine at the wobble position (U34) of tRNA, leading to the formation of s(2)U34.</text>
</comment>
<comment type="catalytic activity">
    <reaction evidence="1">
        <text>S-sulfanyl-L-cysteinyl-[protein] + uridine(34) in tRNA + AH2 + ATP = 2-thiouridine(34) in tRNA + L-cysteinyl-[protein] + A + AMP + diphosphate + H(+)</text>
        <dbReference type="Rhea" id="RHEA:47032"/>
        <dbReference type="Rhea" id="RHEA-COMP:10131"/>
        <dbReference type="Rhea" id="RHEA-COMP:11726"/>
        <dbReference type="Rhea" id="RHEA-COMP:11727"/>
        <dbReference type="Rhea" id="RHEA-COMP:11728"/>
        <dbReference type="ChEBI" id="CHEBI:13193"/>
        <dbReference type="ChEBI" id="CHEBI:15378"/>
        <dbReference type="ChEBI" id="CHEBI:17499"/>
        <dbReference type="ChEBI" id="CHEBI:29950"/>
        <dbReference type="ChEBI" id="CHEBI:30616"/>
        <dbReference type="ChEBI" id="CHEBI:33019"/>
        <dbReference type="ChEBI" id="CHEBI:61963"/>
        <dbReference type="ChEBI" id="CHEBI:65315"/>
        <dbReference type="ChEBI" id="CHEBI:87170"/>
        <dbReference type="ChEBI" id="CHEBI:456215"/>
        <dbReference type="EC" id="2.8.1.13"/>
    </reaction>
</comment>
<comment type="subcellular location">
    <subcellularLocation>
        <location evidence="1">Cytoplasm</location>
    </subcellularLocation>
</comment>
<comment type="similarity">
    <text evidence="1">Belongs to the MnmA/TRMU family.</text>
</comment>
<accession>A9AH63</accession>
<name>MNMA_BURM1</name>
<dbReference type="EC" id="2.8.1.13" evidence="1"/>
<dbReference type="EMBL" id="CP000868">
    <property type="protein sequence ID" value="ABX16370.1"/>
    <property type="molecule type" value="Genomic_DNA"/>
</dbReference>
<dbReference type="EMBL" id="AP009385">
    <property type="protein sequence ID" value="BAG42516.1"/>
    <property type="molecule type" value="Genomic_DNA"/>
</dbReference>
<dbReference type="RefSeq" id="WP_012214105.1">
    <property type="nucleotide sequence ID" value="NC_010084.1"/>
</dbReference>
<dbReference type="SMR" id="A9AH63"/>
<dbReference type="STRING" id="395019.BMULJ_00552"/>
<dbReference type="KEGG" id="bmj:BMULJ_00552"/>
<dbReference type="KEGG" id="bmu:Bmul_2686"/>
<dbReference type="eggNOG" id="COG0482">
    <property type="taxonomic scope" value="Bacteria"/>
</dbReference>
<dbReference type="HOGENOM" id="CLU_035188_1_0_4"/>
<dbReference type="Proteomes" id="UP000008815">
    <property type="component" value="Chromosome 1"/>
</dbReference>
<dbReference type="GO" id="GO:0005737">
    <property type="term" value="C:cytoplasm"/>
    <property type="evidence" value="ECO:0007669"/>
    <property type="project" value="UniProtKB-SubCell"/>
</dbReference>
<dbReference type="GO" id="GO:0005524">
    <property type="term" value="F:ATP binding"/>
    <property type="evidence" value="ECO:0007669"/>
    <property type="project" value="UniProtKB-KW"/>
</dbReference>
<dbReference type="GO" id="GO:0000049">
    <property type="term" value="F:tRNA binding"/>
    <property type="evidence" value="ECO:0007669"/>
    <property type="project" value="UniProtKB-KW"/>
</dbReference>
<dbReference type="GO" id="GO:0103016">
    <property type="term" value="F:tRNA-uridine 2-sulfurtransferase activity"/>
    <property type="evidence" value="ECO:0007669"/>
    <property type="project" value="UniProtKB-EC"/>
</dbReference>
<dbReference type="GO" id="GO:0002143">
    <property type="term" value="P:tRNA wobble position uridine thiolation"/>
    <property type="evidence" value="ECO:0007669"/>
    <property type="project" value="TreeGrafter"/>
</dbReference>
<dbReference type="CDD" id="cd01998">
    <property type="entry name" value="MnmA_TRMU-like"/>
    <property type="match status" value="1"/>
</dbReference>
<dbReference type="FunFam" id="2.30.30.280:FF:000001">
    <property type="entry name" value="tRNA-specific 2-thiouridylase MnmA"/>
    <property type="match status" value="1"/>
</dbReference>
<dbReference type="FunFam" id="2.40.30.10:FF:000023">
    <property type="entry name" value="tRNA-specific 2-thiouridylase MnmA"/>
    <property type="match status" value="1"/>
</dbReference>
<dbReference type="FunFam" id="3.40.50.620:FF:000004">
    <property type="entry name" value="tRNA-specific 2-thiouridylase MnmA"/>
    <property type="match status" value="1"/>
</dbReference>
<dbReference type="Gene3D" id="2.30.30.280">
    <property type="entry name" value="Adenine nucleotide alpha hydrolases-like domains"/>
    <property type="match status" value="1"/>
</dbReference>
<dbReference type="Gene3D" id="3.40.50.620">
    <property type="entry name" value="HUPs"/>
    <property type="match status" value="1"/>
</dbReference>
<dbReference type="Gene3D" id="2.40.30.10">
    <property type="entry name" value="Translation factors"/>
    <property type="match status" value="1"/>
</dbReference>
<dbReference type="HAMAP" id="MF_00144">
    <property type="entry name" value="tRNA_thiouridyl_MnmA"/>
    <property type="match status" value="1"/>
</dbReference>
<dbReference type="InterPro" id="IPR004506">
    <property type="entry name" value="MnmA-like"/>
</dbReference>
<dbReference type="InterPro" id="IPR046885">
    <property type="entry name" value="MnmA-like_C"/>
</dbReference>
<dbReference type="InterPro" id="IPR046884">
    <property type="entry name" value="MnmA-like_central"/>
</dbReference>
<dbReference type="InterPro" id="IPR023382">
    <property type="entry name" value="MnmA-like_central_sf"/>
</dbReference>
<dbReference type="InterPro" id="IPR014729">
    <property type="entry name" value="Rossmann-like_a/b/a_fold"/>
</dbReference>
<dbReference type="NCBIfam" id="NF001138">
    <property type="entry name" value="PRK00143.1"/>
    <property type="match status" value="1"/>
</dbReference>
<dbReference type="NCBIfam" id="TIGR00420">
    <property type="entry name" value="trmU"/>
    <property type="match status" value="1"/>
</dbReference>
<dbReference type="PANTHER" id="PTHR11933:SF5">
    <property type="entry name" value="MITOCHONDRIAL TRNA-SPECIFIC 2-THIOURIDYLASE 1"/>
    <property type="match status" value="1"/>
</dbReference>
<dbReference type="PANTHER" id="PTHR11933">
    <property type="entry name" value="TRNA 5-METHYLAMINOMETHYL-2-THIOURIDYLATE -METHYLTRANSFERASE"/>
    <property type="match status" value="1"/>
</dbReference>
<dbReference type="Pfam" id="PF03054">
    <property type="entry name" value="tRNA_Me_trans"/>
    <property type="match status" value="1"/>
</dbReference>
<dbReference type="Pfam" id="PF20258">
    <property type="entry name" value="tRNA_Me_trans_C"/>
    <property type="match status" value="1"/>
</dbReference>
<dbReference type="Pfam" id="PF20259">
    <property type="entry name" value="tRNA_Me_trans_M"/>
    <property type="match status" value="1"/>
</dbReference>
<dbReference type="SUPFAM" id="SSF52402">
    <property type="entry name" value="Adenine nucleotide alpha hydrolases-like"/>
    <property type="match status" value="1"/>
</dbReference>
<reference key="1">
    <citation type="submission" date="2007-10" db="EMBL/GenBank/DDBJ databases">
        <title>Complete sequence of chromosome 1 of Burkholderia multivorans ATCC 17616.</title>
        <authorList>
            <person name="Copeland A."/>
            <person name="Lucas S."/>
            <person name="Lapidus A."/>
            <person name="Barry K."/>
            <person name="Glavina del Rio T."/>
            <person name="Dalin E."/>
            <person name="Tice H."/>
            <person name="Pitluck S."/>
            <person name="Chain P."/>
            <person name="Malfatti S."/>
            <person name="Shin M."/>
            <person name="Vergez L."/>
            <person name="Schmutz J."/>
            <person name="Larimer F."/>
            <person name="Land M."/>
            <person name="Hauser L."/>
            <person name="Kyrpides N."/>
            <person name="Kim E."/>
            <person name="Tiedje J."/>
            <person name="Richardson P."/>
        </authorList>
    </citation>
    <scope>NUCLEOTIDE SEQUENCE [LARGE SCALE GENOMIC DNA]</scope>
    <source>
        <strain>ATCC 17616 / 249</strain>
    </source>
</reference>
<reference key="2">
    <citation type="submission" date="2007-04" db="EMBL/GenBank/DDBJ databases">
        <title>Complete genome sequence of Burkholderia multivorans ATCC 17616.</title>
        <authorList>
            <person name="Ohtsubo Y."/>
            <person name="Yamashita A."/>
            <person name="Kurokawa K."/>
            <person name="Takami H."/>
            <person name="Yuhara S."/>
            <person name="Nishiyama E."/>
            <person name="Endo R."/>
            <person name="Miyazaki R."/>
            <person name="Ono A."/>
            <person name="Yano K."/>
            <person name="Ito M."/>
            <person name="Sota M."/>
            <person name="Yuji N."/>
            <person name="Hattori M."/>
            <person name="Tsuda M."/>
        </authorList>
    </citation>
    <scope>NUCLEOTIDE SEQUENCE [LARGE SCALE GENOMIC DNA]</scope>
    <source>
        <strain>ATCC 17616 / 249</strain>
    </source>
</reference>
<proteinExistence type="inferred from homology"/>
<organism>
    <name type="scientific">Burkholderia multivorans (strain ATCC 17616 / 249)</name>
    <dbReference type="NCBI Taxonomy" id="395019"/>
    <lineage>
        <taxon>Bacteria</taxon>
        <taxon>Pseudomonadati</taxon>
        <taxon>Pseudomonadota</taxon>
        <taxon>Betaproteobacteria</taxon>
        <taxon>Burkholderiales</taxon>
        <taxon>Burkholderiaceae</taxon>
        <taxon>Burkholderia</taxon>
        <taxon>Burkholderia cepacia complex</taxon>
    </lineage>
</organism>
<keyword id="KW-0067">ATP-binding</keyword>
<keyword id="KW-0963">Cytoplasm</keyword>
<keyword id="KW-1015">Disulfide bond</keyword>
<keyword id="KW-0547">Nucleotide-binding</keyword>
<keyword id="KW-1185">Reference proteome</keyword>
<keyword id="KW-0694">RNA-binding</keyword>
<keyword id="KW-0808">Transferase</keyword>
<keyword id="KW-0819">tRNA processing</keyword>
<keyword id="KW-0820">tRNA-binding</keyword>
<protein>
    <recommendedName>
        <fullName evidence="1">tRNA-specific 2-thiouridylase MnmA</fullName>
        <ecNumber evidence="1">2.8.1.13</ecNumber>
    </recommendedName>
</protein>
<sequence length="381" mass="41461">MSKRRVVVGMSGGVDSSVTAWLLKEQGYDVVGLFMKNWEDDDDGEYCSTRQDWIDVVSVADLIGIDVEAVNFAAEYKDRVFAEFLREYSAGRTPNPDVLCNAEIKFKAFLDHAMSLGAETIATGHYARVRERDGRFELLKAFDHTKDQSYFLHRLNQAQLSKTMFPLGEIPKTKVREIAAQIGLPNAKKKDSTGICFIGERPFRDFLNRYLPTKPGPMKTPDGKLVGEHIGLAFYTFGQRKGIGLGGSKDGSGEPWFVAAKDIASNTLYVVQGHDHPWLLSRELVAGNVSWVAGEPPAEGFACGAKTRYRQADAACTFARAGGERFSLAFADAQWAVTPGQSAVLYDGEICLGGGIIEFAATGQPGHAPAPAAAPALAEAR</sequence>
<evidence type="ECO:0000255" key="1">
    <source>
        <dbReference type="HAMAP-Rule" id="MF_00144"/>
    </source>
</evidence>
<gene>
    <name evidence="1" type="primary">mnmA</name>
    <name type="ordered locus">Bmul_2686</name>
    <name type="ordered locus">BMULJ_00552</name>
</gene>
<feature type="chain" id="PRO_0000349557" description="tRNA-specific 2-thiouridylase MnmA">
    <location>
        <begin position="1"/>
        <end position="381"/>
    </location>
</feature>
<feature type="region of interest" description="Interaction with target base in tRNA" evidence="1">
    <location>
        <begin position="95"/>
        <end position="97"/>
    </location>
</feature>
<feature type="region of interest" description="Interaction with tRNA" evidence="1">
    <location>
        <begin position="146"/>
        <end position="148"/>
    </location>
</feature>
<feature type="region of interest" description="Interaction with tRNA" evidence="1">
    <location>
        <begin position="308"/>
        <end position="309"/>
    </location>
</feature>
<feature type="active site" description="Nucleophile" evidence="1">
    <location>
        <position position="100"/>
    </location>
</feature>
<feature type="active site" description="Cysteine persulfide intermediate" evidence="1">
    <location>
        <position position="196"/>
    </location>
</feature>
<feature type="binding site" evidence="1">
    <location>
        <begin position="9"/>
        <end position="16"/>
    </location>
    <ligand>
        <name>ATP</name>
        <dbReference type="ChEBI" id="CHEBI:30616"/>
    </ligand>
</feature>
<feature type="binding site" evidence="1">
    <location>
        <position position="35"/>
    </location>
    <ligand>
        <name>ATP</name>
        <dbReference type="ChEBI" id="CHEBI:30616"/>
    </ligand>
</feature>
<feature type="binding site" evidence="1">
    <location>
        <position position="124"/>
    </location>
    <ligand>
        <name>ATP</name>
        <dbReference type="ChEBI" id="CHEBI:30616"/>
    </ligand>
</feature>
<feature type="site" description="Interaction with tRNA" evidence="1">
    <location>
        <position position="125"/>
    </location>
</feature>
<feature type="site" description="Interaction with tRNA" evidence="1">
    <location>
        <position position="341"/>
    </location>
</feature>
<feature type="disulfide bond" description="Alternate" evidence="1">
    <location>
        <begin position="100"/>
        <end position="196"/>
    </location>
</feature>